<evidence type="ECO:0000255" key="1"/>
<evidence type="ECO:0000256" key="2">
    <source>
        <dbReference type="SAM" id="MobiDB-lite"/>
    </source>
</evidence>
<evidence type="ECO:0000305" key="3"/>
<sequence length="229" mass="25549">MNKNGLWNVLKKQFLPGQTKDGEKPKLTKYHYFLFVFVLGVSFMLVSQLFSSPEKTENAKTITAVSSQHSADSKEKTAEVFKASKSDKPKDSIDDYEKEYENQLKEILETIIGVDDVSVVVNVDATSLKVYEKNKSNKNTTTEETDKEGGKRSVTDQSSEEEIVMIKNGDKETPVVVQTKKPDIRGVLVVAQGVDNVQIKQTIIEAVTRVLDVPSHRVAVAPKKIKEDS</sequence>
<proteinExistence type="predicted"/>
<organism>
    <name type="scientific">Bacillus subtilis (strain 168)</name>
    <dbReference type="NCBI Taxonomy" id="224308"/>
    <lineage>
        <taxon>Bacteria</taxon>
        <taxon>Bacillati</taxon>
        <taxon>Bacillota</taxon>
        <taxon>Bacilli</taxon>
        <taxon>Bacillales</taxon>
        <taxon>Bacillaceae</taxon>
        <taxon>Bacillus</taxon>
    </lineage>
</organism>
<reference key="1">
    <citation type="submission" date="1995-09" db="EMBL/GenBank/DDBJ databases">
        <authorList>
            <person name="Guerout-Fleury A.M."/>
            <person name="Gonzy-Treboul G."/>
            <person name="Stragier P."/>
        </authorList>
    </citation>
    <scope>NUCLEOTIDE SEQUENCE [GENOMIC DNA]</scope>
    <source>
        <strain>168 / JH642</strain>
    </source>
</reference>
<reference key="2">
    <citation type="journal article" date="1996" name="Microbiology">
        <title>Systematic sequencing of the 283 kb 210 degrees-232 degrees region of the Bacillus subtilis genome containing the skin element and many sporulation genes.</title>
        <authorList>
            <person name="Mizuno M."/>
            <person name="Masuda S."/>
            <person name="Takemaru K."/>
            <person name="Hosono S."/>
            <person name="Sato T."/>
            <person name="Takeuchi M."/>
            <person name="Kobayashi Y."/>
        </authorList>
    </citation>
    <scope>NUCLEOTIDE SEQUENCE [GENOMIC DNA]</scope>
    <source>
        <strain>168 / JH642</strain>
    </source>
</reference>
<reference key="3">
    <citation type="journal article" date="1997" name="Nature">
        <title>The complete genome sequence of the Gram-positive bacterium Bacillus subtilis.</title>
        <authorList>
            <person name="Kunst F."/>
            <person name="Ogasawara N."/>
            <person name="Moszer I."/>
            <person name="Albertini A.M."/>
            <person name="Alloni G."/>
            <person name="Azevedo V."/>
            <person name="Bertero M.G."/>
            <person name="Bessieres P."/>
            <person name="Bolotin A."/>
            <person name="Borchert S."/>
            <person name="Borriss R."/>
            <person name="Boursier L."/>
            <person name="Brans A."/>
            <person name="Braun M."/>
            <person name="Brignell S.C."/>
            <person name="Bron S."/>
            <person name="Brouillet S."/>
            <person name="Bruschi C.V."/>
            <person name="Caldwell B."/>
            <person name="Capuano V."/>
            <person name="Carter N.M."/>
            <person name="Choi S.-K."/>
            <person name="Codani J.-J."/>
            <person name="Connerton I.F."/>
            <person name="Cummings N.J."/>
            <person name="Daniel R.A."/>
            <person name="Denizot F."/>
            <person name="Devine K.M."/>
            <person name="Duesterhoeft A."/>
            <person name="Ehrlich S.D."/>
            <person name="Emmerson P.T."/>
            <person name="Entian K.-D."/>
            <person name="Errington J."/>
            <person name="Fabret C."/>
            <person name="Ferrari E."/>
            <person name="Foulger D."/>
            <person name="Fritz C."/>
            <person name="Fujita M."/>
            <person name="Fujita Y."/>
            <person name="Fuma S."/>
            <person name="Galizzi A."/>
            <person name="Galleron N."/>
            <person name="Ghim S.-Y."/>
            <person name="Glaser P."/>
            <person name="Goffeau A."/>
            <person name="Golightly E.J."/>
            <person name="Grandi G."/>
            <person name="Guiseppi G."/>
            <person name="Guy B.J."/>
            <person name="Haga K."/>
            <person name="Haiech J."/>
            <person name="Harwood C.R."/>
            <person name="Henaut A."/>
            <person name="Hilbert H."/>
            <person name="Holsappel S."/>
            <person name="Hosono S."/>
            <person name="Hullo M.-F."/>
            <person name="Itaya M."/>
            <person name="Jones L.-M."/>
            <person name="Joris B."/>
            <person name="Karamata D."/>
            <person name="Kasahara Y."/>
            <person name="Klaerr-Blanchard M."/>
            <person name="Klein C."/>
            <person name="Kobayashi Y."/>
            <person name="Koetter P."/>
            <person name="Koningstein G."/>
            <person name="Krogh S."/>
            <person name="Kumano M."/>
            <person name="Kurita K."/>
            <person name="Lapidus A."/>
            <person name="Lardinois S."/>
            <person name="Lauber J."/>
            <person name="Lazarevic V."/>
            <person name="Lee S.-M."/>
            <person name="Levine A."/>
            <person name="Liu H."/>
            <person name="Masuda S."/>
            <person name="Mauel C."/>
            <person name="Medigue C."/>
            <person name="Medina N."/>
            <person name="Mellado R.P."/>
            <person name="Mizuno M."/>
            <person name="Moestl D."/>
            <person name="Nakai S."/>
            <person name="Noback M."/>
            <person name="Noone D."/>
            <person name="O'Reilly M."/>
            <person name="Ogawa K."/>
            <person name="Ogiwara A."/>
            <person name="Oudega B."/>
            <person name="Park S.-H."/>
            <person name="Parro V."/>
            <person name="Pohl T.M."/>
            <person name="Portetelle D."/>
            <person name="Porwollik S."/>
            <person name="Prescott A.M."/>
            <person name="Presecan E."/>
            <person name="Pujic P."/>
            <person name="Purnelle B."/>
            <person name="Rapoport G."/>
            <person name="Rey M."/>
            <person name="Reynolds S."/>
            <person name="Rieger M."/>
            <person name="Rivolta C."/>
            <person name="Rocha E."/>
            <person name="Roche B."/>
            <person name="Rose M."/>
            <person name="Sadaie Y."/>
            <person name="Sato T."/>
            <person name="Scanlan E."/>
            <person name="Schleich S."/>
            <person name="Schroeter R."/>
            <person name="Scoffone F."/>
            <person name="Sekiguchi J."/>
            <person name="Sekowska A."/>
            <person name="Seror S.J."/>
            <person name="Serror P."/>
            <person name="Shin B.-S."/>
            <person name="Soldo B."/>
            <person name="Sorokin A."/>
            <person name="Tacconi E."/>
            <person name="Takagi T."/>
            <person name="Takahashi H."/>
            <person name="Takemaru K."/>
            <person name="Takeuchi M."/>
            <person name="Tamakoshi A."/>
            <person name="Tanaka T."/>
            <person name="Terpstra P."/>
            <person name="Tognoni A."/>
            <person name="Tosato V."/>
            <person name="Uchiyama S."/>
            <person name="Vandenbol M."/>
            <person name="Vannier F."/>
            <person name="Vassarotti A."/>
            <person name="Viari A."/>
            <person name="Wambutt R."/>
            <person name="Wedler E."/>
            <person name="Wedler H."/>
            <person name="Weitzenegger T."/>
            <person name="Winters P."/>
            <person name="Wipat A."/>
            <person name="Yamamoto H."/>
            <person name="Yamane K."/>
            <person name="Yasumoto K."/>
            <person name="Yata K."/>
            <person name="Yoshida K."/>
            <person name="Yoshikawa H.-F."/>
            <person name="Zumstein E."/>
            <person name="Yoshikawa H."/>
            <person name="Danchin A."/>
        </authorList>
    </citation>
    <scope>NUCLEOTIDE SEQUENCE [LARGE SCALE GENOMIC DNA]</scope>
    <source>
        <strain>168</strain>
    </source>
</reference>
<reference key="4">
    <citation type="journal article" date="2009" name="Microbiology">
        <title>From a consortium sequence to a unified sequence: the Bacillus subtilis 168 reference genome a decade later.</title>
        <authorList>
            <person name="Barbe V."/>
            <person name="Cruveiller S."/>
            <person name="Kunst F."/>
            <person name="Lenoble P."/>
            <person name="Meurice G."/>
            <person name="Sekowska A."/>
            <person name="Vallenet D."/>
            <person name="Wang T."/>
            <person name="Moszer I."/>
            <person name="Medigue C."/>
            <person name="Danchin A."/>
        </authorList>
    </citation>
    <scope>SEQUENCE REVISION TO 14</scope>
</reference>
<dbReference type="EMBL" id="U35252">
    <property type="protein sequence ID" value="AAA76726.1"/>
    <property type="molecule type" value="Genomic_DNA"/>
</dbReference>
<dbReference type="EMBL" id="D84432">
    <property type="protein sequence ID" value="BAA12566.1"/>
    <property type="molecule type" value="Genomic_DNA"/>
</dbReference>
<dbReference type="EMBL" id="AL009126">
    <property type="protein sequence ID" value="CAB14368.2"/>
    <property type="molecule type" value="Genomic_DNA"/>
</dbReference>
<dbReference type="PIR" id="B69712">
    <property type="entry name" value="B69712"/>
</dbReference>
<dbReference type="RefSeq" id="NP_390317.2">
    <property type="nucleotide sequence ID" value="NC_000964.3"/>
</dbReference>
<dbReference type="RefSeq" id="WP_003230248.1">
    <property type="nucleotide sequence ID" value="NZ_OZ025638.1"/>
</dbReference>
<dbReference type="SMR" id="P49784"/>
<dbReference type="FunCoup" id="P49784">
    <property type="interactions" value="61"/>
</dbReference>
<dbReference type="STRING" id="224308.BSU24370"/>
<dbReference type="TCDB" id="9.B.70.1.1">
    <property type="family name" value="the multicomponent putative spoiiiae exporter (spoiiia-e) family"/>
</dbReference>
<dbReference type="PaxDb" id="224308-BSU24370"/>
<dbReference type="EnsemblBacteria" id="CAB14368">
    <property type="protein sequence ID" value="CAB14368"/>
    <property type="gene ID" value="BSU_24370"/>
</dbReference>
<dbReference type="GeneID" id="938595"/>
<dbReference type="KEGG" id="bsu:BSU24370"/>
<dbReference type="PATRIC" id="fig|224308.179.peg.2655"/>
<dbReference type="eggNOG" id="ENOG50330Z5">
    <property type="taxonomic scope" value="Bacteria"/>
</dbReference>
<dbReference type="InParanoid" id="P49784"/>
<dbReference type="OrthoDB" id="2381602at2"/>
<dbReference type="BioCyc" id="BSUB:BSU24370-MONOMER"/>
<dbReference type="Proteomes" id="UP000001570">
    <property type="component" value="Chromosome"/>
</dbReference>
<dbReference type="GO" id="GO:0005886">
    <property type="term" value="C:plasma membrane"/>
    <property type="evidence" value="ECO:0007669"/>
    <property type="project" value="UniProtKB-SubCell"/>
</dbReference>
<dbReference type="GO" id="GO:0030435">
    <property type="term" value="P:sporulation resulting in formation of a cellular spore"/>
    <property type="evidence" value="ECO:0007669"/>
    <property type="project" value="UniProtKB-KW"/>
</dbReference>
<dbReference type="InterPro" id="IPR014195">
    <property type="entry name" value="Spore_III_AG"/>
</dbReference>
<dbReference type="NCBIfam" id="TIGR02830">
    <property type="entry name" value="spore_III_AG"/>
    <property type="match status" value="1"/>
</dbReference>
<comment type="subcellular location">
    <subcellularLocation>
        <location evidence="3">Cell membrane</location>
        <topology evidence="3">Single-pass membrane protein</topology>
    </subcellularLocation>
</comment>
<protein>
    <recommendedName>
        <fullName>Stage III sporulation protein AG</fullName>
    </recommendedName>
</protein>
<accession>P49784</accession>
<gene>
    <name type="primary">spoIIIAG</name>
    <name type="ordered locus">BSU24370</name>
</gene>
<keyword id="KW-1003">Cell membrane</keyword>
<keyword id="KW-0472">Membrane</keyword>
<keyword id="KW-1185">Reference proteome</keyword>
<keyword id="KW-0749">Sporulation</keyword>
<keyword id="KW-0812">Transmembrane</keyword>
<keyword id="KW-1133">Transmembrane helix</keyword>
<name>SP3AG_BACSU</name>
<feature type="chain" id="PRO_0000072071" description="Stage III sporulation protein AG">
    <location>
        <begin position="1"/>
        <end position="229"/>
    </location>
</feature>
<feature type="transmembrane region" description="Helical" evidence="1">
    <location>
        <begin position="30"/>
        <end position="50"/>
    </location>
</feature>
<feature type="region of interest" description="Disordered" evidence="2">
    <location>
        <begin position="64"/>
        <end position="93"/>
    </location>
</feature>
<feature type="region of interest" description="Disordered" evidence="2">
    <location>
        <begin position="136"/>
        <end position="159"/>
    </location>
</feature>
<feature type="compositionally biased region" description="Basic and acidic residues" evidence="2">
    <location>
        <begin position="71"/>
        <end position="93"/>
    </location>
</feature>
<feature type="sequence conflict" description="In Ref. 2; BAA12566." evidence="3" ref="2">
    <original>F</original>
    <variation>S</variation>
    <location>
        <position position="14"/>
    </location>
</feature>